<organism evidence="9">
    <name type="scientific">Cyprinus carpio</name>
    <name type="common">Common carp</name>
    <dbReference type="NCBI Taxonomy" id="7962"/>
    <lineage>
        <taxon>Eukaryota</taxon>
        <taxon>Metazoa</taxon>
        <taxon>Chordata</taxon>
        <taxon>Craniata</taxon>
        <taxon>Vertebrata</taxon>
        <taxon>Euteleostomi</taxon>
        <taxon>Actinopterygii</taxon>
        <taxon>Neopterygii</taxon>
        <taxon>Teleostei</taxon>
        <taxon>Ostariophysi</taxon>
        <taxon>Cypriniformes</taxon>
        <taxon>Cyprinidae</taxon>
        <taxon>Cyprininae</taxon>
        <taxon>Cyprinus</taxon>
    </lineage>
</organism>
<protein>
    <recommendedName>
        <fullName>Mitogen-activated protein kinase 8B</fullName>
        <shortName>MAP kinase 8B</shortName>
        <shortName>MAPK 8B</shortName>
        <ecNumber>2.7.11.24</ecNumber>
    </recommendedName>
    <alternativeName>
        <fullName>Stress-activated protein kinase JNKb</fullName>
    </alternativeName>
    <alternativeName>
        <fullName>c-Jun N-terminal kinase B</fullName>
    </alternativeName>
</protein>
<feature type="chain" id="PRO_0000186267" description="Mitogen-activated protein kinase 8B">
    <location>
        <begin position="1"/>
        <end position="427"/>
    </location>
</feature>
<feature type="domain" description="Protein kinase" evidence="4">
    <location>
        <begin position="26"/>
        <end position="321"/>
    </location>
</feature>
<feature type="region of interest" description="Disordered" evidence="6">
    <location>
        <begin position="372"/>
        <end position="427"/>
    </location>
</feature>
<feature type="short sequence motif" description="TXY">
    <location>
        <begin position="183"/>
        <end position="185"/>
    </location>
</feature>
<feature type="compositionally biased region" description="Low complexity" evidence="6">
    <location>
        <begin position="387"/>
        <end position="403"/>
    </location>
</feature>
<feature type="compositionally biased region" description="Polar residues" evidence="6">
    <location>
        <begin position="404"/>
        <end position="417"/>
    </location>
</feature>
<feature type="active site" description="Proton acceptor" evidence="4 5">
    <location>
        <position position="151"/>
    </location>
</feature>
<feature type="binding site" evidence="4">
    <location>
        <begin position="33"/>
        <end position="40"/>
    </location>
    <ligand>
        <name>ATP</name>
        <dbReference type="ChEBI" id="CHEBI:30616"/>
    </ligand>
</feature>
<feature type="binding site" evidence="4">
    <location>
        <position position="55"/>
    </location>
    <ligand>
        <name>ATP</name>
        <dbReference type="ChEBI" id="CHEBI:30616"/>
    </ligand>
</feature>
<feature type="modified residue" description="Phosphothreonine" evidence="1">
    <location>
        <position position="183"/>
    </location>
</feature>
<feature type="modified residue" description="Phosphotyrosine" evidence="1">
    <location>
        <position position="185"/>
    </location>
</feature>
<proteinExistence type="evidence at transcript level"/>
<reference evidence="8" key="1">
    <citation type="journal article" date="1997" name="J. Biochem.">
        <title>Structure and expression of carp mitogen-activated protein kinases homologous to mammalian JNK/SAPK.</title>
        <authorList>
            <person name="Hashimoto H."/>
            <person name="Matsuo Y."/>
            <person name="Yokoyama Y."/>
            <person name="Toyohara H."/>
            <person name="Sakaguchi M."/>
        </authorList>
    </citation>
    <scope>NUCLEOTIDE SEQUENCE [MRNA]</scope>
    <scope>TISSUE SPECIFICITY</scope>
    <source>
        <tissue>Ovary</tissue>
    </source>
</reference>
<keyword id="KW-0067">ATP-binding</keyword>
<keyword id="KW-0090">Biological rhythms</keyword>
<keyword id="KW-0418">Kinase</keyword>
<keyword id="KW-0547">Nucleotide-binding</keyword>
<keyword id="KW-0597">Phosphoprotein</keyword>
<keyword id="KW-1185">Reference proteome</keyword>
<keyword id="KW-0723">Serine/threonine-protein kinase</keyword>
<keyword id="KW-0808">Transferase</keyword>
<sequence>MNKNKREKEFYSVDVGDSTFTVLKRYQNLRPIGSGAQGIVCSAYDHNLERNVAIKKLSRPFQNQTHAKRAYRELVLMKCVNHKNIIGLLNVFTPQKTLEEFQDVYLVMELMDANLCQVIQMELDHERLSYLLYQMLCGTKHLHSAGIIHRDLKPSNIVVKSDCTLKILDFGLARTAATGLLMTPYVVTRYYRAPEVILGMGYQANVDVWSVGCIMAEMVRGSVLFPGSDHIDQWNKVIEQLGTPSQEFMMKLNQSVRTYVENRPRYTGYSFEKLFPDVLFPADSEHNKLKASQARDLLSKMLVIDASKRISVDEALQHPYINVWYDPAEVEAPPPLIIDKQLDEREHTVEEWKELIFKEVLDWEERMKNGVIRGQPSPIGAAVINGSPQPSSSSSINDVSSMSTEPTVASDTDSSLEASAGPLSCCR</sequence>
<gene>
    <name type="primary">mapk8b</name>
</gene>
<comment type="function">
    <text evidence="2 3">Responds to activation by environmental stress and pro-inflammatory cytokines by phosphorylating a number of transcription factors, primarily components of AP-1 such as c-Jun and ATF2 and thus regulates AP-1 transcriptional activity. May play a role in the regulation of the circadian clock.</text>
</comment>
<comment type="catalytic activity">
    <reaction>
        <text>L-seryl-[protein] + ATP = O-phospho-L-seryl-[protein] + ADP + H(+)</text>
        <dbReference type="Rhea" id="RHEA:17989"/>
        <dbReference type="Rhea" id="RHEA-COMP:9863"/>
        <dbReference type="Rhea" id="RHEA-COMP:11604"/>
        <dbReference type="ChEBI" id="CHEBI:15378"/>
        <dbReference type="ChEBI" id="CHEBI:29999"/>
        <dbReference type="ChEBI" id="CHEBI:30616"/>
        <dbReference type="ChEBI" id="CHEBI:83421"/>
        <dbReference type="ChEBI" id="CHEBI:456216"/>
        <dbReference type="EC" id="2.7.11.24"/>
    </reaction>
</comment>
<comment type="catalytic activity">
    <reaction>
        <text>L-threonyl-[protein] + ATP = O-phospho-L-threonyl-[protein] + ADP + H(+)</text>
        <dbReference type="Rhea" id="RHEA:46608"/>
        <dbReference type="Rhea" id="RHEA-COMP:11060"/>
        <dbReference type="Rhea" id="RHEA-COMP:11605"/>
        <dbReference type="ChEBI" id="CHEBI:15378"/>
        <dbReference type="ChEBI" id="CHEBI:30013"/>
        <dbReference type="ChEBI" id="CHEBI:30616"/>
        <dbReference type="ChEBI" id="CHEBI:61977"/>
        <dbReference type="ChEBI" id="CHEBI:456216"/>
        <dbReference type="EC" id="2.7.11.24"/>
    </reaction>
</comment>
<comment type="cofactor">
    <cofactor evidence="2">
        <name>Mg(2+)</name>
        <dbReference type="ChEBI" id="CHEBI:18420"/>
    </cofactor>
</comment>
<comment type="activity regulation">
    <text evidence="2">Activated by threonine and tyrosine phosphorylation.</text>
</comment>
<comment type="tissue specificity">
    <text evidence="7">Expressed at high levels in the ovary and at lower levels in brain, gill, heart, spleen, liver, kidney, muscle, bladder and gut.</text>
</comment>
<comment type="domain">
    <text>The TXY motif contains the threonine and tyrosine residues whose phosphorylation activates the MAP kinases.</text>
</comment>
<comment type="PTM">
    <text evidence="1">Dually phosphorylated on Thr-183 and Tyr-185, which activates the enzyme.</text>
</comment>
<comment type="similarity">
    <text evidence="8">Belongs to the protein kinase superfamily. CMGC Ser/Thr protein kinase family. MAP kinase subfamily.</text>
</comment>
<name>MK08B_CYPCA</name>
<dbReference type="EC" id="2.7.11.24"/>
<dbReference type="EMBL" id="AB001744">
    <property type="protein sequence ID" value="BAA22598.1"/>
    <property type="molecule type" value="mRNA"/>
</dbReference>
<dbReference type="PIR" id="JC5694">
    <property type="entry name" value="JC5694"/>
</dbReference>
<dbReference type="SMR" id="O42099"/>
<dbReference type="Ensembl" id="ENSCCRT00015002500.1">
    <property type="protein sequence ID" value="ENSCCRP00015002368.1"/>
    <property type="gene ID" value="ENSCCRG00015001463.1"/>
</dbReference>
<dbReference type="BRENDA" id="2.7.11.24">
    <property type="organism ID" value="1195"/>
</dbReference>
<dbReference type="Proteomes" id="UP000694384">
    <property type="component" value="Unplaced"/>
</dbReference>
<dbReference type="Proteomes" id="UP000694427">
    <property type="component" value="Unplaced"/>
</dbReference>
<dbReference type="Proteomes" id="UP000694700">
    <property type="component" value="Unplaced"/>
</dbReference>
<dbReference type="Proteomes" id="UP000694701">
    <property type="component" value="Unplaced"/>
</dbReference>
<dbReference type="Proteomes" id="UP001155660">
    <property type="component" value="Unplaced"/>
</dbReference>
<dbReference type="GO" id="GO:0005524">
    <property type="term" value="F:ATP binding"/>
    <property type="evidence" value="ECO:0007669"/>
    <property type="project" value="UniProtKB-KW"/>
</dbReference>
<dbReference type="GO" id="GO:0004707">
    <property type="term" value="F:MAP kinase activity"/>
    <property type="evidence" value="ECO:0007669"/>
    <property type="project" value="UniProtKB-EC"/>
</dbReference>
<dbReference type="GO" id="GO:0106310">
    <property type="term" value="F:protein serine kinase activity"/>
    <property type="evidence" value="ECO:0007669"/>
    <property type="project" value="RHEA"/>
</dbReference>
<dbReference type="GO" id="GO:0004674">
    <property type="term" value="F:protein serine/threonine kinase activity"/>
    <property type="evidence" value="ECO:0000250"/>
    <property type="project" value="UniProtKB"/>
</dbReference>
<dbReference type="GO" id="GO:1900227">
    <property type="term" value="P:positive regulation of NLRP3 inflammasome complex assembly"/>
    <property type="evidence" value="ECO:0000250"/>
    <property type="project" value="UniProtKB"/>
</dbReference>
<dbReference type="GO" id="GO:0048511">
    <property type="term" value="P:rhythmic process"/>
    <property type="evidence" value="ECO:0007669"/>
    <property type="project" value="UniProtKB-KW"/>
</dbReference>
<dbReference type="CDD" id="cd07850">
    <property type="entry name" value="STKc_JNK"/>
    <property type="match status" value="1"/>
</dbReference>
<dbReference type="FunFam" id="1.10.510.10:FF:000009">
    <property type="entry name" value="Mitogen-activated protein kinase"/>
    <property type="match status" value="1"/>
</dbReference>
<dbReference type="FunFam" id="3.30.200.20:FF:000210">
    <property type="entry name" value="Mitogen-activated protein kinase"/>
    <property type="match status" value="1"/>
</dbReference>
<dbReference type="Gene3D" id="3.30.200.20">
    <property type="entry name" value="Phosphorylase Kinase, domain 1"/>
    <property type="match status" value="1"/>
</dbReference>
<dbReference type="Gene3D" id="1.10.510.10">
    <property type="entry name" value="Transferase(Phosphotransferase) domain 1"/>
    <property type="match status" value="1"/>
</dbReference>
<dbReference type="InterPro" id="IPR011009">
    <property type="entry name" value="Kinase-like_dom_sf"/>
</dbReference>
<dbReference type="InterPro" id="IPR050117">
    <property type="entry name" value="MAP_kinase"/>
</dbReference>
<dbReference type="InterPro" id="IPR003527">
    <property type="entry name" value="MAP_kinase_CS"/>
</dbReference>
<dbReference type="InterPro" id="IPR008351">
    <property type="entry name" value="MAPK_JNK"/>
</dbReference>
<dbReference type="InterPro" id="IPR000719">
    <property type="entry name" value="Prot_kinase_dom"/>
</dbReference>
<dbReference type="InterPro" id="IPR008271">
    <property type="entry name" value="Ser/Thr_kinase_AS"/>
</dbReference>
<dbReference type="PANTHER" id="PTHR24055">
    <property type="entry name" value="MITOGEN-ACTIVATED PROTEIN KINASE"/>
    <property type="match status" value="1"/>
</dbReference>
<dbReference type="Pfam" id="PF00069">
    <property type="entry name" value="Pkinase"/>
    <property type="match status" value="1"/>
</dbReference>
<dbReference type="PRINTS" id="PR01772">
    <property type="entry name" value="JNKMAPKINASE"/>
</dbReference>
<dbReference type="SMART" id="SM00220">
    <property type="entry name" value="S_TKc"/>
    <property type="match status" value="1"/>
</dbReference>
<dbReference type="SUPFAM" id="SSF56112">
    <property type="entry name" value="Protein kinase-like (PK-like)"/>
    <property type="match status" value="1"/>
</dbReference>
<dbReference type="PROSITE" id="PS01351">
    <property type="entry name" value="MAPK"/>
    <property type="match status" value="1"/>
</dbReference>
<dbReference type="PROSITE" id="PS50011">
    <property type="entry name" value="PROTEIN_KINASE_DOM"/>
    <property type="match status" value="1"/>
</dbReference>
<dbReference type="PROSITE" id="PS00108">
    <property type="entry name" value="PROTEIN_KINASE_ST"/>
    <property type="match status" value="1"/>
</dbReference>
<evidence type="ECO:0000250" key="1"/>
<evidence type="ECO:0000250" key="2">
    <source>
        <dbReference type="UniProtKB" id="P45983"/>
    </source>
</evidence>
<evidence type="ECO:0000250" key="3">
    <source>
        <dbReference type="UniProtKB" id="Q91Y86"/>
    </source>
</evidence>
<evidence type="ECO:0000255" key="4">
    <source>
        <dbReference type="PROSITE-ProRule" id="PRU00159"/>
    </source>
</evidence>
<evidence type="ECO:0000255" key="5">
    <source>
        <dbReference type="PROSITE-ProRule" id="PRU10027"/>
    </source>
</evidence>
<evidence type="ECO:0000256" key="6">
    <source>
        <dbReference type="SAM" id="MobiDB-lite"/>
    </source>
</evidence>
<evidence type="ECO:0000269" key="7">
    <source>
    </source>
</evidence>
<evidence type="ECO:0000305" key="8"/>
<evidence type="ECO:0000312" key="9">
    <source>
        <dbReference type="EMBL" id="BAA22598.1"/>
    </source>
</evidence>
<accession>O42099</accession>